<dbReference type="EC" id="7.1.1.-" evidence="1"/>
<dbReference type="EMBL" id="AJ002490">
    <property type="protein sequence ID" value="CAA05498.1"/>
    <property type="status" value="ALT_SEQ"/>
    <property type="molecule type" value="Genomic_DNA"/>
</dbReference>
<dbReference type="EMBL" id="AJ002491">
    <property type="protein sequence ID" value="CAA05498.1"/>
    <property type="status" value="JOINED"/>
    <property type="molecule type" value="Genomic_DNA"/>
</dbReference>
<dbReference type="EMBL" id="AP000423">
    <property type="protein sequence ID" value="BAA84430.1"/>
    <property type="status" value="ALT_SEQ"/>
    <property type="molecule type" value="Genomic_DNA"/>
</dbReference>
<dbReference type="SMR" id="P0CC32"/>
<dbReference type="BioGRID" id="29920">
    <property type="interactions" value="1"/>
</dbReference>
<dbReference type="FunCoup" id="P0CC32">
    <property type="interactions" value="33"/>
</dbReference>
<dbReference type="STRING" id="3702.P0CC32"/>
<dbReference type="TCDB" id="3.D.1.8.1">
    <property type="family name" value="the h+ or na+-translocating nadh dehydrogenase (ndh) family"/>
</dbReference>
<dbReference type="PaxDb" id="3702-ATCG00890.1"/>
<dbReference type="KEGG" id="ath:ArthCp068"/>
<dbReference type="KEGG" id="ath:ArthCp086"/>
<dbReference type="Araport" id="ATCG00890"/>
<dbReference type="TAIR" id="ATCG00890"/>
<dbReference type="eggNOG" id="KOG4668">
    <property type="taxonomic scope" value="Eukaryota"/>
</dbReference>
<dbReference type="HOGENOM" id="CLU_007100_1_2_1"/>
<dbReference type="InParanoid" id="P0CC32"/>
<dbReference type="BioCyc" id="ARA:ATCG00890-MONOMER"/>
<dbReference type="PRO" id="PR:P0CC32"/>
<dbReference type="Proteomes" id="UP000006548">
    <property type="component" value="Chloroplast Pltd"/>
</dbReference>
<dbReference type="ExpressionAtlas" id="P0CC32">
    <property type="expression patterns" value="baseline and differential"/>
</dbReference>
<dbReference type="GO" id="GO:0009535">
    <property type="term" value="C:chloroplast thylakoid membrane"/>
    <property type="evidence" value="ECO:0007669"/>
    <property type="project" value="UniProtKB-SubCell"/>
</dbReference>
<dbReference type="GO" id="GO:0008137">
    <property type="term" value="F:NADH dehydrogenase (ubiquinone) activity"/>
    <property type="evidence" value="ECO:0007669"/>
    <property type="project" value="InterPro"/>
</dbReference>
<dbReference type="GO" id="GO:0048038">
    <property type="term" value="F:quinone binding"/>
    <property type="evidence" value="ECO:0007669"/>
    <property type="project" value="UniProtKB-KW"/>
</dbReference>
<dbReference type="GO" id="GO:0042773">
    <property type="term" value="P:ATP synthesis coupled electron transport"/>
    <property type="evidence" value="ECO:0007669"/>
    <property type="project" value="InterPro"/>
</dbReference>
<dbReference type="GO" id="GO:0019684">
    <property type="term" value="P:photosynthesis, light reaction"/>
    <property type="evidence" value="ECO:0007669"/>
    <property type="project" value="UniProtKB-UniRule"/>
</dbReference>
<dbReference type="HAMAP" id="MF_00445">
    <property type="entry name" value="NDH1_NuoN_1"/>
    <property type="match status" value="1"/>
</dbReference>
<dbReference type="InterPro" id="IPR010096">
    <property type="entry name" value="NADH-Q_OxRdtase_suN/2"/>
</dbReference>
<dbReference type="InterPro" id="IPR001750">
    <property type="entry name" value="ND/Mrp_TM"/>
</dbReference>
<dbReference type="InterPro" id="IPR045693">
    <property type="entry name" value="Ndh2_N"/>
</dbReference>
<dbReference type="NCBIfam" id="TIGR01770">
    <property type="entry name" value="NDH_I_N"/>
    <property type="match status" value="1"/>
</dbReference>
<dbReference type="NCBIfam" id="NF002701">
    <property type="entry name" value="PRK02504.1"/>
    <property type="match status" value="1"/>
</dbReference>
<dbReference type="PANTHER" id="PTHR22773">
    <property type="entry name" value="NADH DEHYDROGENASE"/>
    <property type="match status" value="1"/>
</dbReference>
<dbReference type="Pfam" id="PF19530">
    <property type="entry name" value="Ndh2_N"/>
    <property type="match status" value="1"/>
</dbReference>
<dbReference type="Pfam" id="PF00361">
    <property type="entry name" value="Proton_antipo_M"/>
    <property type="match status" value="1"/>
</dbReference>
<dbReference type="PRINTS" id="PR01434">
    <property type="entry name" value="NADHDHGNASE5"/>
</dbReference>
<evidence type="ECO:0000255" key="1">
    <source>
        <dbReference type="HAMAP-Rule" id="MF_00445"/>
    </source>
</evidence>
<evidence type="ECO:0000269" key="2">
    <source ref="1"/>
</evidence>
<evidence type="ECO:0000305" key="3"/>
<accession>P0CC32</accession>
<accession>O47022</accession>
<accession>Q9T3G4</accession>
<gene>
    <name evidence="1" type="primary">ndhB1</name>
    <name type="synonym">ndhB-A</name>
    <name type="ordered locus">AtCg00890</name>
</gene>
<keyword id="KW-0150">Chloroplast</keyword>
<keyword id="KW-0472">Membrane</keyword>
<keyword id="KW-0520">NAD</keyword>
<keyword id="KW-0521">NADP</keyword>
<keyword id="KW-0934">Plastid</keyword>
<keyword id="KW-0618">Plastoquinone</keyword>
<keyword id="KW-0874">Quinone</keyword>
<keyword id="KW-1185">Reference proteome</keyword>
<keyword id="KW-0691">RNA editing</keyword>
<keyword id="KW-0793">Thylakoid</keyword>
<keyword id="KW-1278">Translocase</keyword>
<keyword id="KW-0812">Transmembrane</keyword>
<keyword id="KW-1133">Transmembrane helix</keyword>
<keyword id="KW-0813">Transport</keyword>
<proteinExistence type="evidence at transcript level"/>
<comment type="function">
    <text evidence="1">NDH shuttles electrons from NAD(P)H:plastoquinone, via FMN and iron-sulfur (Fe-S) centers, to quinones in the photosynthetic chain and possibly in a chloroplast respiratory chain. The immediate electron acceptor for the enzyme in this species is believed to be plastoquinone. Couples the redox reaction to proton translocation, and thus conserves the redox energy in a proton gradient.</text>
</comment>
<comment type="catalytic activity">
    <reaction evidence="1">
        <text>a plastoquinone + NADH + (n+1) H(+)(in) = a plastoquinol + NAD(+) + n H(+)(out)</text>
        <dbReference type="Rhea" id="RHEA:42608"/>
        <dbReference type="Rhea" id="RHEA-COMP:9561"/>
        <dbReference type="Rhea" id="RHEA-COMP:9562"/>
        <dbReference type="ChEBI" id="CHEBI:15378"/>
        <dbReference type="ChEBI" id="CHEBI:17757"/>
        <dbReference type="ChEBI" id="CHEBI:57540"/>
        <dbReference type="ChEBI" id="CHEBI:57945"/>
        <dbReference type="ChEBI" id="CHEBI:62192"/>
    </reaction>
</comment>
<comment type="catalytic activity">
    <reaction evidence="1">
        <text>a plastoquinone + NADPH + (n+1) H(+)(in) = a plastoquinol + NADP(+) + n H(+)(out)</text>
        <dbReference type="Rhea" id="RHEA:42612"/>
        <dbReference type="Rhea" id="RHEA-COMP:9561"/>
        <dbReference type="Rhea" id="RHEA-COMP:9562"/>
        <dbReference type="ChEBI" id="CHEBI:15378"/>
        <dbReference type="ChEBI" id="CHEBI:17757"/>
        <dbReference type="ChEBI" id="CHEBI:57783"/>
        <dbReference type="ChEBI" id="CHEBI:58349"/>
        <dbReference type="ChEBI" id="CHEBI:62192"/>
    </reaction>
</comment>
<comment type="subunit">
    <text evidence="1">NDH is composed of at least 16 different subunits, 5 of which are encoded in the nucleus.</text>
</comment>
<comment type="subcellular location">
    <subcellularLocation>
        <location evidence="1">Plastid</location>
        <location evidence="1">Chloroplast thylakoid membrane</location>
        <topology evidence="1">Multi-pass membrane protein</topology>
    </subcellularLocation>
</comment>
<comment type="RNA editing">
    <location>
        <position position="50" evidence="2"/>
    </location>
    <location>
        <position position="156" evidence="2"/>
    </location>
    <location>
        <position position="196" evidence="2"/>
    </location>
    <location>
        <position position="249" evidence="2"/>
    </location>
    <location>
        <position position="277" evidence="2"/>
    </location>
    <location>
        <position position="279" evidence="2"/>
    </location>
    <location>
        <position position="419" evidence="2"/>
    </location>
    <location>
        <position position="494" evidence="2"/>
    </location>
</comment>
<comment type="similarity">
    <text evidence="1">Belongs to the complex I subunit 2 family.</text>
</comment>
<comment type="sequence caution" evidence="3">
    <conflict type="erroneous initiation">
        <sequence resource="EMBL-CDS" id="BAA84430"/>
    </conflict>
    <text>Truncated N-terminus.</text>
</comment>
<geneLocation type="chloroplast"/>
<organism>
    <name type="scientific">Arabidopsis thaliana</name>
    <name type="common">Mouse-ear cress</name>
    <dbReference type="NCBI Taxonomy" id="3702"/>
    <lineage>
        <taxon>Eukaryota</taxon>
        <taxon>Viridiplantae</taxon>
        <taxon>Streptophyta</taxon>
        <taxon>Embryophyta</taxon>
        <taxon>Tracheophyta</taxon>
        <taxon>Spermatophyta</taxon>
        <taxon>Magnoliopsida</taxon>
        <taxon>eudicotyledons</taxon>
        <taxon>Gunneridae</taxon>
        <taxon>Pentapetalae</taxon>
        <taxon>rosids</taxon>
        <taxon>malvids</taxon>
        <taxon>Brassicales</taxon>
        <taxon>Brassicaceae</taxon>
        <taxon>Camelineae</taxon>
        <taxon>Arabidopsis</taxon>
    </lineage>
</organism>
<protein>
    <recommendedName>
        <fullName evidence="1">NAD(P)H-quinone oxidoreductase subunit 2 A, chloroplastic</fullName>
        <ecNumber evidence="1">7.1.1.-</ecNumber>
    </recommendedName>
    <alternativeName>
        <fullName evidence="1">NAD(P)H dehydrogenase, subunit 2 A</fullName>
    </alternativeName>
    <alternativeName>
        <fullName evidence="1">NADH-plastoquinone oxidoreductase subunit 2 A</fullName>
    </alternativeName>
</protein>
<feature type="chain" id="PRO_0000117655" description="NAD(P)H-quinone oxidoreductase subunit 2 A, chloroplastic">
    <location>
        <begin position="1"/>
        <end position="512"/>
    </location>
</feature>
<feature type="transmembrane region" description="Helical" evidence="1">
    <location>
        <begin position="31"/>
        <end position="51"/>
    </location>
</feature>
<feature type="transmembrane region" description="Helical" evidence="1">
    <location>
        <begin position="57"/>
        <end position="77"/>
    </location>
</feature>
<feature type="transmembrane region" description="Helical" evidence="1">
    <location>
        <begin position="99"/>
        <end position="119"/>
    </location>
</feature>
<feature type="transmembrane region" description="Helical" evidence="1">
    <location>
        <begin position="124"/>
        <end position="144"/>
    </location>
</feature>
<feature type="transmembrane region" description="Helical" evidence="1">
    <location>
        <begin position="149"/>
        <end position="169"/>
    </location>
</feature>
<feature type="transmembrane region" description="Helical" evidence="1">
    <location>
        <begin position="183"/>
        <end position="203"/>
    </location>
</feature>
<feature type="transmembrane region" description="Helical" evidence="1">
    <location>
        <begin position="229"/>
        <end position="249"/>
    </location>
</feature>
<feature type="transmembrane region" description="Helical" evidence="1">
    <location>
        <begin position="261"/>
        <end position="281"/>
    </location>
</feature>
<feature type="transmembrane region" description="Helical" evidence="1">
    <location>
        <begin position="295"/>
        <end position="315"/>
    </location>
</feature>
<feature type="transmembrane region" description="Helical" evidence="1">
    <location>
        <begin position="323"/>
        <end position="343"/>
    </location>
</feature>
<feature type="transmembrane region" description="Helical" evidence="1">
    <location>
        <begin position="354"/>
        <end position="374"/>
    </location>
</feature>
<feature type="transmembrane region" description="Helical" evidence="1">
    <location>
        <begin position="395"/>
        <end position="415"/>
    </location>
</feature>
<feature type="transmembrane region" description="Helical" evidence="1">
    <location>
        <begin position="418"/>
        <end position="438"/>
    </location>
</feature>
<feature type="transmembrane region" description="Helical" evidence="1">
    <location>
        <begin position="484"/>
        <end position="504"/>
    </location>
</feature>
<reference key="1">
    <citation type="online journal article" date="1998" name="Plant Gene Register">
        <title>Sequence and transcript editing of ndhB gene of Arabidopsis thaliana L. plastid.</title>
        <authorList>
            <person name="del Campo E.M."/>
            <person name="Albertazzi F."/>
            <person name="Freyer R."/>
            <person name="Maier R.M."/>
            <person name="Sabater B."/>
            <person name="Martin M."/>
        </authorList>
        <locator>PGR98-093</locator>
    </citation>
    <scope>NUCLEOTIDE SEQUENCE [GENOMIC DNA]</scope>
    <scope>RNA EDITING</scope>
    <source>
        <strain>cv. Landsberg erecta</strain>
    </source>
</reference>
<reference key="2">
    <citation type="journal article" date="1999" name="DNA Res.">
        <title>Complete structure of the chloroplast genome of Arabidopsis thaliana.</title>
        <authorList>
            <person name="Sato S."/>
            <person name="Nakamura Y."/>
            <person name="Kaneko T."/>
            <person name="Asamizu E."/>
            <person name="Tabata S."/>
        </authorList>
    </citation>
    <scope>NUCLEOTIDE SEQUENCE [LARGE SCALE GENOMIC DNA]</scope>
    <source>
        <strain>cv. Columbia</strain>
    </source>
</reference>
<name>NU2C1_ARATH</name>
<sequence length="512" mass="57153">MIWHVQNENFILDSTRIFMKAFHLLLFDGSFIFPECILIFGLILLLMIDLTSDQKDIPWLYFISSTSFVMSITALLFRWREEPMISFSGNFQTNNFNEIFQFLILLCSTLCIPLSVEYIECTEMAITEFLLFILTATLGGMFLCGANDLITIFVALECFSLCSYLLSGYTKKDIRSNEATMKYLLMGGASSSILVYGFSWLYGSSGGEIELQEIVNGLINTQMYNSPGISIALIFITVGIGFKLSLAPFHQWTPDVYEGSPTPVVAFLSVTSKVAALALATRIFDIPFYFSSNEWHLLLEILAILSMIFGNLIAITQTSMKRMLAYSSIGQIGYVIIGIIVGDSNGGYASMITYMLFYIAMNLGTFACIILFGLRTGTDNIRDYAGLYTKDPFLALSLALCLLSLGGLPPLAGFFGKLYLFWCGWQAGLYFLVSIGLLTSVLSIYYYLKIIKLLMTGRNQEITPHMRNYRISPLRSNNSIELSMIVCVIASTILGISMNPIIAIAQDTLFSF</sequence>